<evidence type="ECO:0000250" key="1"/>
<evidence type="ECO:0000250" key="2">
    <source>
        <dbReference type="UniProtKB" id="Q641K1"/>
    </source>
</evidence>
<evidence type="ECO:0000250" key="3">
    <source>
        <dbReference type="UniProtKB" id="Q9UPW5"/>
    </source>
</evidence>
<evidence type="ECO:0000255" key="4">
    <source>
        <dbReference type="PROSITE-ProRule" id="PRU01379"/>
    </source>
</evidence>
<evidence type="ECO:0000256" key="5">
    <source>
        <dbReference type="SAM" id="MobiDB-lite"/>
    </source>
</evidence>
<evidence type="ECO:0000305" key="6"/>
<gene>
    <name type="primary">agtpbp1</name>
    <name type="synonym">ccp1</name>
</gene>
<feature type="chain" id="PRO_0000308692" description="Cytosolic carboxypeptidase 1">
    <location>
        <begin position="1"/>
        <end position="1153"/>
    </location>
</feature>
<feature type="domain" description="Peptidase M14" evidence="4">
    <location>
        <begin position="774"/>
        <end position="1063"/>
    </location>
</feature>
<feature type="region of interest" description="Disordered" evidence="5">
    <location>
        <begin position="357"/>
        <end position="400"/>
    </location>
</feature>
<feature type="region of interest" description="Disordered" evidence="5">
    <location>
        <begin position="1108"/>
        <end position="1153"/>
    </location>
</feature>
<feature type="compositionally biased region" description="Acidic residues" evidence="5">
    <location>
        <begin position="364"/>
        <end position="389"/>
    </location>
</feature>
<feature type="compositionally biased region" description="Acidic residues" evidence="5">
    <location>
        <begin position="1108"/>
        <end position="1128"/>
    </location>
</feature>
<feature type="compositionally biased region" description="Polar residues" evidence="5">
    <location>
        <begin position="1141"/>
        <end position="1153"/>
    </location>
</feature>
<feature type="active site" description="Proton donor/acceptor" evidence="4">
    <location>
        <position position="1027"/>
    </location>
</feature>
<feature type="binding site" evidence="4">
    <location>
        <position position="845"/>
    </location>
    <ligand>
        <name>Zn(2+)</name>
        <dbReference type="ChEBI" id="CHEBI:29105"/>
        <note>catalytic</note>
    </ligand>
</feature>
<feature type="binding site" evidence="4">
    <location>
        <position position="848"/>
    </location>
    <ligand>
        <name>Zn(2+)</name>
        <dbReference type="ChEBI" id="CHEBI:29105"/>
        <note>catalytic</note>
    </ligand>
</feature>
<feature type="binding site" evidence="4">
    <location>
        <position position="942"/>
    </location>
    <ligand>
        <name>Zn(2+)</name>
        <dbReference type="ChEBI" id="CHEBI:29105"/>
        <note>catalytic</note>
    </ligand>
</feature>
<name>CBPC1_DANRE</name>
<dbReference type="EC" id="3.4.17.-" evidence="2"/>
<dbReference type="EC" id="3.4.17.24" evidence="2"/>
<dbReference type="EMBL" id="DQ018111">
    <property type="protein sequence ID" value="AAY42353.1"/>
    <property type="molecule type" value="mRNA"/>
</dbReference>
<dbReference type="RefSeq" id="NP_001019616.1">
    <property type="nucleotide sequence ID" value="NM_001024445.2"/>
</dbReference>
<dbReference type="SMR" id="Q4U2V3"/>
<dbReference type="FunCoup" id="Q4U2V3">
    <property type="interactions" value="807"/>
</dbReference>
<dbReference type="STRING" id="7955.ENSDARP00000131912"/>
<dbReference type="PaxDb" id="7955-ENSDARP00000025120"/>
<dbReference type="GeneID" id="554164"/>
<dbReference type="KEGG" id="dre:554164"/>
<dbReference type="AGR" id="ZFIN:ZDB-GENE-081104-267"/>
<dbReference type="CTD" id="23287"/>
<dbReference type="ZFIN" id="ZDB-GENE-081104-267">
    <property type="gene designation" value="agtpbp1"/>
</dbReference>
<dbReference type="eggNOG" id="KOG3641">
    <property type="taxonomic scope" value="Eukaryota"/>
</dbReference>
<dbReference type="InParanoid" id="Q4U2V3"/>
<dbReference type="OrthoDB" id="10253041at2759"/>
<dbReference type="BRENDA" id="3.4.17.24">
    <property type="organism ID" value="928"/>
</dbReference>
<dbReference type="PRO" id="PR:Q4U2V3"/>
<dbReference type="Proteomes" id="UP000000437">
    <property type="component" value="Chromosome 8"/>
</dbReference>
<dbReference type="GO" id="GO:0005737">
    <property type="term" value="C:cytoplasm"/>
    <property type="evidence" value="ECO:0000250"/>
    <property type="project" value="UniProtKB"/>
</dbReference>
<dbReference type="GO" id="GO:0005829">
    <property type="term" value="C:cytosol"/>
    <property type="evidence" value="ECO:0000250"/>
    <property type="project" value="UniProtKB"/>
</dbReference>
<dbReference type="GO" id="GO:0015630">
    <property type="term" value="C:microtubule cytoskeleton"/>
    <property type="evidence" value="ECO:0000318"/>
    <property type="project" value="GO_Central"/>
</dbReference>
<dbReference type="GO" id="GO:0005739">
    <property type="term" value="C:mitochondrion"/>
    <property type="evidence" value="ECO:0000250"/>
    <property type="project" value="UniProtKB"/>
</dbReference>
<dbReference type="GO" id="GO:0005634">
    <property type="term" value="C:nucleus"/>
    <property type="evidence" value="ECO:0000250"/>
    <property type="project" value="UniProtKB"/>
</dbReference>
<dbReference type="GO" id="GO:0004181">
    <property type="term" value="F:metallocarboxypeptidase activity"/>
    <property type="evidence" value="ECO:0000250"/>
    <property type="project" value="UniProtKB"/>
</dbReference>
<dbReference type="GO" id="GO:0015631">
    <property type="term" value="F:tubulin binding"/>
    <property type="evidence" value="ECO:0000250"/>
    <property type="project" value="UniProtKB"/>
</dbReference>
<dbReference type="GO" id="GO:0008270">
    <property type="term" value="F:zinc ion binding"/>
    <property type="evidence" value="ECO:0007669"/>
    <property type="project" value="InterPro"/>
</dbReference>
<dbReference type="GO" id="GO:0035609">
    <property type="term" value="P:C-terminal protein deglutamylation"/>
    <property type="evidence" value="ECO:0000250"/>
    <property type="project" value="UniProtKB"/>
</dbReference>
<dbReference type="GO" id="GO:0021702">
    <property type="term" value="P:cerebellar Purkinje cell differentiation"/>
    <property type="evidence" value="ECO:0000250"/>
    <property type="project" value="UniProtKB"/>
</dbReference>
<dbReference type="GO" id="GO:0043009">
    <property type="term" value="P:chordate embryonic development"/>
    <property type="evidence" value="ECO:0000315"/>
    <property type="project" value="ZFIN"/>
</dbReference>
<dbReference type="GO" id="GO:0001754">
    <property type="term" value="P:eye photoreceptor cell differentiation"/>
    <property type="evidence" value="ECO:0000250"/>
    <property type="project" value="UniProtKB"/>
</dbReference>
<dbReference type="GO" id="GO:0007005">
    <property type="term" value="P:mitochondrion organization"/>
    <property type="evidence" value="ECO:0000250"/>
    <property type="project" value="UniProtKB"/>
</dbReference>
<dbReference type="GO" id="GO:0050905">
    <property type="term" value="P:neuromuscular process"/>
    <property type="evidence" value="ECO:0000250"/>
    <property type="project" value="UniProtKB"/>
</dbReference>
<dbReference type="GO" id="GO:0021772">
    <property type="term" value="P:olfactory bulb development"/>
    <property type="evidence" value="ECO:0000250"/>
    <property type="project" value="UniProtKB"/>
</dbReference>
<dbReference type="GO" id="GO:0035610">
    <property type="term" value="P:protein side chain deglutamylation"/>
    <property type="evidence" value="ECO:0000250"/>
    <property type="project" value="UniProtKB"/>
</dbReference>
<dbReference type="GO" id="GO:0006508">
    <property type="term" value="P:proteolysis"/>
    <property type="evidence" value="ECO:0007669"/>
    <property type="project" value="UniProtKB-KW"/>
</dbReference>
<dbReference type="GO" id="GO:0033077">
    <property type="term" value="P:T cell differentiation in thymus"/>
    <property type="evidence" value="ECO:0000315"/>
    <property type="project" value="ZFIN"/>
</dbReference>
<dbReference type="CDD" id="cd06906">
    <property type="entry name" value="M14_Nna1"/>
    <property type="match status" value="1"/>
</dbReference>
<dbReference type="FunFam" id="3.40.630.10:FF:000024">
    <property type="entry name" value="ATP/GTP binding protein 1"/>
    <property type="match status" value="1"/>
</dbReference>
<dbReference type="FunFam" id="1.25.10.10:FF:000125">
    <property type="entry name" value="cytosolic carboxypeptidase 1 isoform X1"/>
    <property type="match status" value="1"/>
</dbReference>
<dbReference type="FunFam" id="2.60.40.3120:FF:000001">
    <property type="entry name" value="cytosolic carboxypeptidase 1 isoform X1"/>
    <property type="match status" value="1"/>
</dbReference>
<dbReference type="Gene3D" id="2.60.40.3120">
    <property type="match status" value="1"/>
</dbReference>
<dbReference type="Gene3D" id="1.25.10.10">
    <property type="entry name" value="Leucine-rich Repeat Variant"/>
    <property type="match status" value="1"/>
</dbReference>
<dbReference type="Gene3D" id="3.40.630.10">
    <property type="entry name" value="Zn peptidases"/>
    <property type="match status" value="1"/>
</dbReference>
<dbReference type="InterPro" id="IPR011989">
    <property type="entry name" value="ARM-like"/>
</dbReference>
<dbReference type="InterPro" id="IPR016024">
    <property type="entry name" value="ARM-type_fold"/>
</dbReference>
<dbReference type="InterPro" id="IPR033852">
    <property type="entry name" value="CBPC1/4"/>
</dbReference>
<dbReference type="InterPro" id="IPR050821">
    <property type="entry name" value="Cytosolic_carboxypeptidase"/>
</dbReference>
<dbReference type="InterPro" id="IPR040626">
    <property type="entry name" value="Pepdidase_M14_N"/>
</dbReference>
<dbReference type="InterPro" id="IPR000834">
    <property type="entry name" value="Peptidase_M14"/>
</dbReference>
<dbReference type="PANTHER" id="PTHR12756">
    <property type="entry name" value="CYTOSOLIC CARBOXYPEPTIDASE"/>
    <property type="match status" value="1"/>
</dbReference>
<dbReference type="PANTHER" id="PTHR12756:SF24">
    <property type="entry name" value="CYTOSOLIC CARBOXYPEPTIDASE 1"/>
    <property type="match status" value="1"/>
</dbReference>
<dbReference type="Pfam" id="PF18027">
    <property type="entry name" value="Pepdidase_M14_N"/>
    <property type="match status" value="1"/>
</dbReference>
<dbReference type="Pfam" id="PF00246">
    <property type="entry name" value="Peptidase_M14"/>
    <property type="match status" value="1"/>
</dbReference>
<dbReference type="SUPFAM" id="SSF48371">
    <property type="entry name" value="ARM repeat"/>
    <property type="match status" value="1"/>
</dbReference>
<dbReference type="SUPFAM" id="SSF53187">
    <property type="entry name" value="Zn-dependent exopeptidases"/>
    <property type="match status" value="1"/>
</dbReference>
<dbReference type="PROSITE" id="PS52035">
    <property type="entry name" value="PEPTIDASE_M14"/>
    <property type="match status" value="1"/>
</dbReference>
<proteinExistence type="evidence at transcript level"/>
<accession>Q4U2V3</accession>
<protein>
    <recommendedName>
        <fullName evidence="2">Cytosolic carboxypeptidase 1</fullName>
        <ecNumber evidence="2">3.4.17.-</ecNumber>
        <ecNumber evidence="2">3.4.17.24</ecNumber>
    </recommendedName>
    <alternativeName>
        <fullName evidence="2">ATP/GTP-binding protein 1</fullName>
    </alternativeName>
    <alternativeName>
        <fullName evidence="6">Protein deglutamylase CCP1</fullName>
    </alternativeName>
</protein>
<organism>
    <name type="scientific">Danio rerio</name>
    <name type="common">Zebrafish</name>
    <name type="synonym">Brachydanio rerio</name>
    <dbReference type="NCBI Taxonomy" id="7955"/>
    <lineage>
        <taxon>Eukaryota</taxon>
        <taxon>Metazoa</taxon>
        <taxon>Chordata</taxon>
        <taxon>Craniata</taxon>
        <taxon>Vertebrata</taxon>
        <taxon>Euteleostomi</taxon>
        <taxon>Actinopterygii</taxon>
        <taxon>Neopterygii</taxon>
        <taxon>Teleostei</taxon>
        <taxon>Ostariophysi</taxon>
        <taxon>Cypriniformes</taxon>
        <taxon>Danionidae</taxon>
        <taxon>Danioninae</taxon>
        <taxon>Danio</taxon>
    </lineage>
</organism>
<reference key="1">
    <citation type="submission" date="2005-04" db="EMBL/GenBank/DDBJ databases">
        <title>Genetic analyses of larval melanocyte regeneration in zebrafish.</title>
        <authorList>
            <person name="Yang C.-T."/>
            <person name="Johnson S.L."/>
        </authorList>
    </citation>
    <scope>NUCLEOTIDE SEQUENCE [MRNA]</scope>
    <source>
        <strain>SJD</strain>
    </source>
</reference>
<sequence length="1153" mass="129792">MNKPKMAAEKSASRVLMLLSQLERLNEESRVSDNDAIRQVTGKILHLIQTQEKTRKEVGSKGSGGMEIILSSLENTRDLQTTLNILGILNELLTVGGGRRTGLFVSKGGTAILLQLLVSSSKDPPANEELMLHIHSLLVKVGPKDRKFGVKARLNGALNVTLNLAKHNLQNYKLLLPCLQVLRVYSSNSVNAVSLGKSGALEILFEIVGPFSKKSTTLLKVALDTLAALLKSGMNARRAVDRGYLPTLLAIYQDWHRNDTRHRHVIIRKSILGCIKNITNIKLGRKAFIEASGMRILYNTSTECLPVRTLDPLVNTSSLIMRKCFPKNRLPLPTIKSVFLYPLPHIPAGGPVAQLYNQPPGVDDVVDESDENEATEVDTENDTENEEDDTGHKTQNDDIETDINKLRPKQMNTRPFEELRVYEHFCREFTETFQDIDFEDSISAIPPSRVNSELHRPIIIPTTQSSPGLQNRRPLRESALPLKPEQSPLELDSISIAKRPDGRADADLVCSLGHLILDAAVNGGSVDGCQDDGGEQSVLEVPDTAALLPLHDPELYLEMVKSTRSVPGYTEVAYPDYFGHVALNLREPILERVYGVQRTKIFQDIERLIHSSDILDKVVYDLDNQSSPLTDNGESLKFNSKFESGNLRKAIQVRKFEYDLILNSDINSNHYHQWFYFEVGNMRPGVRYRFNIINCEKSNSQFNYGMQVIMYSVQEAINGSPHWVRTGSDICYYKNHFARSSIAAGGQKGKSYFTMTFTVTFQHKDDVCYFAYHYPYTYSMLKMHLQKLSALCTPEIYYRQEDLCETLGGNGCPLLTITAMPESSSDEHISQFRSRPVIFLSARVHPGETNSSWVMKGSLEFLMSCSPQAQSLRQSYIFKIMPMLNPDGVINGNHRCSLSGEDLNRQWQNPNAELHPTIYHAKSLLQYLRATGRTPLVFCDYHGHSRKKNVFMYGCSIKETMWQSSVNTSTCDLNEDLGYRTLPKLLSQMAPAFSLSSCSFVVERSKEATARVVVWREIGVQRSYTMESTLCGCDQGKYKGLQIGTSELEEMGSQFCLALLRLRRFTSPLELHNHNSHLLDMENELIDTRHIPNITSPTTYVLDEDEPAFLEEVDYSAESNDENDPELEPDLRDNHALPDPSSDSELSHQDSLT</sequence>
<comment type="function">
    <text evidence="2">Metallocarboxypeptidase that mediates protein deglutamylation of tubulin and non-tubulin target proteins. Catalyzes the removal of polyglutamate side chains present on the gamma-carboxyl group of glutamate residues within the C-terminal tail of alpha- and beta-tubulin. Specifically cleaves tubulin long-side-chains, while it is not able to remove the branching point glutamate. Also catalyzes the removal of polyglutamate residues from the carboxy-terminus of alpha-tubulin as well as non-tubulin proteins.</text>
</comment>
<comment type="catalytic activity">
    <reaction evidence="2">
        <text>(L-glutamyl)(n+1)-gamma-L-glutamyl-L-glutamyl-[protein] + H2O = (L-glutamyl)(n)-gamma-L-glutamyl-L-glutamyl-[protein] + L-glutamate</text>
        <dbReference type="Rhea" id="RHEA:60004"/>
        <dbReference type="Rhea" id="RHEA-COMP:15519"/>
        <dbReference type="Rhea" id="RHEA-COMP:15675"/>
        <dbReference type="ChEBI" id="CHEBI:15377"/>
        <dbReference type="ChEBI" id="CHEBI:29985"/>
        <dbReference type="ChEBI" id="CHEBI:143623"/>
    </reaction>
    <physiologicalReaction direction="left-to-right" evidence="2">
        <dbReference type="Rhea" id="RHEA:60005"/>
    </physiologicalReaction>
</comment>
<comment type="catalytic activity">
    <reaction evidence="2">
        <text>C-terminal L-alpha-aminoacyl-L-glutamyl-L-glutamyl-[tubulin] + H2O = C-terminal L-alpha-aminoacyl-L-glutamyl-[tubulin] + L-glutamate</text>
        <dbReference type="Rhea" id="RHEA:63792"/>
        <dbReference type="Rhea" id="RHEA-COMP:16435"/>
        <dbReference type="Rhea" id="RHEA-COMP:16436"/>
        <dbReference type="ChEBI" id="CHEBI:15377"/>
        <dbReference type="ChEBI" id="CHEBI:29985"/>
        <dbReference type="ChEBI" id="CHEBI:149555"/>
        <dbReference type="ChEBI" id="CHEBI:149556"/>
        <dbReference type="EC" id="3.4.17.24"/>
    </reaction>
    <physiologicalReaction direction="left-to-right" evidence="2">
        <dbReference type="Rhea" id="RHEA:63793"/>
    </physiologicalReaction>
</comment>
<comment type="cofactor">
    <cofactor evidence="1">
        <name>Zn(2+)</name>
        <dbReference type="ChEBI" id="CHEBI:29105"/>
    </cofactor>
    <text evidence="1">Binds 1 zinc ion per subunit.</text>
</comment>
<comment type="subcellular location">
    <subcellularLocation>
        <location evidence="3">Cytoplasm</location>
    </subcellularLocation>
    <subcellularLocation>
        <location evidence="2">Cytoplasm</location>
        <location evidence="2">Cytosol</location>
    </subcellularLocation>
    <subcellularLocation>
        <location evidence="2">Nucleus</location>
    </subcellularLocation>
    <subcellularLocation>
        <location evidence="2">Mitochondrion</location>
    </subcellularLocation>
</comment>
<comment type="similarity">
    <text evidence="6">Belongs to the peptidase M14 family.</text>
</comment>
<keyword id="KW-0121">Carboxypeptidase</keyword>
<keyword id="KW-0963">Cytoplasm</keyword>
<keyword id="KW-0378">Hydrolase</keyword>
<keyword id="KW-0479">Metal-binding</keyword>
<keyword id="KW-0482">Metalloprotease</keyword>
<keyword id="KW-0496">Mitochondrion</keyword>
<keyword id="KW-0539">Nucleus</keyword>
<keyword id="KW-0645">Protease</keyword>
<keyword id="KW-1185">Reference proteome</keyword>
<keyword id="KW-0862">Zinc</keyword>